<keyword id="KW-0150">Chloroplast</keyword>
<keyword id="KW-0472">Membrane</keyword>
<keyword id="KW-0597">Phosphoprotein</keyword>
<keyword id="KW-0602">Photosynthesis</keyword>
<keyword id="KW-0604">Photosystem II</keyword>
<keyword id="KW-0934">Plastid</keyword>
<keyword id="KW-1185">Reference proteome</keyword>
<keyword id="KW-0793">Thylakoid</keyword>
<keyword id="KW-0812">Transmembrane</keyword>
<keyword id="KW-1133">Transmembrane helix</keyword>
<dbReference type="EMBL" id="DQ347959">
    <property type="protein sequence ID" value="ABC56328.1"/>
    <property type="molecule type" value="Genomic_DNA"/>
</dbReference>
<dbReference type="EMBL" id="AM087200">
    <property type="protein sequence ID" value="CAJ32423.1"/>
    <property type="molecule type" value="Genomic_DNA"/>
</dbReference>
<dbReference type="RefSeq" id="AP_004957.1">
    <property type="nucleotide sequence ID" value="AC_000188.1"/>
</dbReference>
<dbReference type="RefSeq" id="YP_008563117.1">
    <property type="nucleotide sequence ID" value="NC_007898.3"/>
</dbReference>
<dbReference type="SMR" id="Q2MI72"/>
<dbReference type="FunCoup" id="Q2MI72">
    <property type="interactions" value="411"/>
</dbReference>
<dbReference type="STRING" id="4081.Q2MI72"/>
<dbReference type="PaxDb" id="4081-Solyc01g007520.2.1"/>
<dbReference type="GeneID" id="3950407"/>
<dbReference type="KEGG" id="sly:3950407"/>
<dbReference type="eggNOG" id="ENOG502S8Y7">
    <property type="taxonomic scope" value="Eukaryota"/>
</dbReference>
<dbReference type="HOGENOM" id="CLU_190203_1_0_1"/>
<dbReference type="InParanoid" id="Q2MI72"/>
<dbReference type="OrthoDB" id="1855002at2759"/>
<dbReference type="PhylomeDB" id="Q2MI72"/>
<dbReference type="Proteomes" id="UP000004994">
    <property type="component" value="Chloroplast"/>
</dbReference>
<dbReference type="ExpressionAtlas" id="Q2MI72">
    <property type="expression patterns" value="baseline and differential"/>
</dbReference>
<dbReference type="GO" id="GO:0009535">
    <property type="term" value="C:chloroplast thylakoid membrane"/>
    <property type="evidence" value="ECO:0007669"/>
    <property type="project" value="UniProtKB-SubCell"/>
</dbReference>
<dbReference type="GO" id="GO:0009523">
    <property type="term" value="C:photosystem II"/>
    <property type="evidence" value="ECO:0007669"/>
    <property type="project" value="UniProtKB-KW"/>
</dbReference>
<dbReference type="GO" id="GO:0042301">
    <property type="term" value="F:phosphate ion binding"/>
    <property type="evidence" value="ECO:0007669"/>
    <property type="project" value="InterPro"/>
</dbReference>
<dbReference type="GO" id="GO:0015979">
    <property type="term" value="P:photosynthesis"/>
    <property type="evidence" value="ECO:0007669"/>
    <property type="project" value="UniProtKB-UniRule"/>
</dbReference>
<dbReference type="GO" id="GO:0050821">
    <property type="term" value="P:protein stabilization"/>
    <property type="evidence" value="ECO:0007669"/>
    <property type="project" value="InterPro"/>
</dbReference>
<dbReference type="FunFam" id="1.20.5.880:FF:000001">
    <property type="entry name" value="Photosystem II reaction center protein H"/>
    <property type="match status" value="1"/>
</dbReference>
<dbReference type="Gene3D" id="1.20.5.880">
    <property type="entry name" value="Photosystem II reaction center protein H"/>
    <property type="match status" value="1"/>
</dbReference>
<dbReference type="HAMAP" id="MF_00752">
    <property type="entry name" value="PSII_PsbH"/>
    <property type="match status" value="1"/>
</dbReference>
<dbReference type="InterPro" id="IPR001056">
    <property type="entry name" value="PSII_PsbH"/>
</dbReference>
<dbReference type="InterPro" id="IPR036863">
    <property type="entry name" value="PSII_PsbH_sf"/>
</dbReference>
<dbReference type="NCBIfam" id="NF002728">
    <property type="entry name" value="PRK02624.1"/>
    <property type="match status" value="1"/>
</dbReference>
<dbReference type="PANTHER" id="PTHR34469">
    <property type="entry name" value="PHOTOSYSTEM II REACTION CENTER PROTEIN H"/>
    <property type="match status" value="1"/>
</dbReference>
<dbReference type="PANTHER" id="PTHR34469:SF4">
    <property type="entry name" value="PHOTOSYSTEM II REACTION CENTER PROTEIN H"/>
    <property type="match status" value="1"/>
</dbReference>
<dbReference type="Pfam" id="PF00737">
    <property type="entry name" value="PsbH"/>
    <property type="match status" value="1"/>
</dbReference>
<dbReference type="SUPFAM" id="SSF161025">
    <property type="entry name" value="Photosystem II 10 kDa phosphoprotein PsbH"/>
    <property type="match status" value="1"/>
</dbReference>
<comment type="function">
    <text evidence="2">One of the components of the core complex of photosystem II (PSII), required for its stability and/or assembly. PSII is a light-driven water:plastoquinone oxidoreductase that uses light energy to abstract electrons from H(2)O, generating O(2) and a proton gradient subsequently used for ATP formation. It consists of a core antenna complex that captures photons, and an electron transfer chain that converts photonic excitation into a charge separation.</text>
</comment>
<comment type="subunit">
    <text evidence="2">PSII is composed of 1 copy each of membrane proteins PsbA, PsbB, PsbC, PsbD, PsbE, PsbF, PsbH, PsbI, PsbJ, PsbK, PsbL, PsbM, PsbT, PsbX, PsbY, PsbZ, Psb30/Ycf12, at least 3 peripheral proteins of the oxygen-evolving complex and a large number of cofactors. It forms dimeric complexes.</text>
</comment>
<comment type="subcellular location">
    <subcellularLocation>
        <location evidence="2">Plastid</location>
        <location evidence="2">Chloroplast thylakoid membrane</location>
        <topology evidence="2">Single-pass membrane protein</topology>
    </subcellularLocation>
</comment>
<comment type="PTM">
    <text evidence="2">Phosphorylation is a light-dependent reaction catalyzed by a membrane-bound kinase; phosphorylation occurs on Thr residue(s) in the N-terminus of the protein.</text>
</comment>
<comment type="similarity">
    <text evidence="2">Belongs to the PsbH family.</text>
</comment>
<reference key="1">
    <citation type="journal article" date="2006" name="Theor. Appl. Genet.">
        <title>Complete chloroplast genome sequences of Solanum bulbocastanum, Solanum lycopersicum and comparative analyses with other Solanaceae genomes.</title>
        <authorList>
            <person name="Daniell H."/>
            <person name="Lee S.-B."/>
            <person name="Grevich J."/>
            <person name="Saski C."/>
            <person name="Quesada-Vargas T."/>
            <person name="Guda C."/>
            <person name="Tomkins J."/>
            <person name="Jansen R.K."/>
        </authorList>
    </citation>
    <scope>NUCLEOTIDE SEQUENCE [LARGE SCALE GENOMIC DNA]</scope>
    <source>
        <strain>cv. LA3023</strain>
    </source>
</reference>
<reference key="2">
    <citation type="journal article" date="2006" name="J. Mol. Evol.">
        <title>Sequence of the tomato chloroplast DNA and evolutionary comparison of solanaceous plastid genomes.</title>
        <authorList>
            <person name="Kahlau S."/>
            <person name="Aspinall S."/>
            <person name="Gray J.C."/>
            <person name="Bock R."/>
        </authorList>
    </citation>
    <scope>NUCLEOTIDE SEQUENCE [LARGE SCALE GENOMIC DNA]</scope>
    <source>
        <strain>cv. IPA-6</strain>
    </source>
</reference>
<sequence length="73" mass="7759">MATQTVENSSRSGPRRTAVGDLLKPLNSEYGKVAPGWGTTPLMGVAMALFAVFLSIILEIYNSSVLLDGISMN</sequence>
<feature type="initiator methionine" description="Removed" evidence="1">
    <location>
        <position position="1"/>
    </location>
</feature>
<feature type="chain" id="PRO_0000275773" description="Photosystem II reaction center protein H">
    <location>
        <begin position="2"/>
        <end position="73"/>
    </location>
</feature>
<feature type="transmembrane region" description="Helical" evidence="2">
    <location>
        <begin position="41"/>
        <end position="61"/>
    </location>
</feature>
<feature type="region of interest" description="Disordered" evidence="3">
    <location>
        <begin position="1"/>
        <end position="20"/>
    </location>
</feature>
<feature type="compositionally biased region" description="Polar residues" evidence="3">
    <location>
        <begin position="1"/>
        <end position="12"/>
    </location>
</feature>
<feature type="modified residue" description="Phosphothreonine" evidence="2">
    <location>
        <position position="3"/>
    </location>
</feature>
<feature type="modified residue" description="Phosphothreonine" evidence="2">
    <location>
        <position position="5"/>
    </location>
</feature>
<geneLocation type="chloroplast"/>
<protein>
    <recommendedName>
        <fullName evidence="2">Photosystem II reaction center protein H</fullName>
        <shortName evidence="2">PSII-H</shortName>
    </recommendedName>
    <alternativeName>
        <fullName evidence="2">Photosystem II 10 kDa phosphoprotein</fullName>
    </alternativeName>
</protein>
<gene>
    <name evidence="2" type="primary">psbH</name>
</gene>
<organism>
    <name type="scientific">Solanum lycopersicum</name>
    <name type="common">Tomato</name>
    <name type="synonym">Lycopersicon esculentum</name>
    <dbReference type="NCBI Taxonomy" id="4081"/>
    <lineage>
        <taxon>Eukaryota</taxon>
        <taxon>Viridiplantae</taxon>
        <taxon>Streptophyta</taxon>
        <taxon>Embryophyta</taxon>
        <taxon>Tracheophyta</taxon>
        <taxon>Spermatophyta</taxon>
        <taxon>Magnoliopsida</taxon>
        <taxon>eudicotyledons</taxon>
        <taxon>Gunneridae</taxon>
        <taxon>Pentapetalae</taxon>
        <taxon>asterids</taxon>
        <taxon>lamiids</taxon>
        <taxon>Solanales</taxon>
        <taxon>Solanaceae</taxon>
        <taxon>Solanoideae</taxon>
        <taxon>Solaneae</taxon>
        <taxon>Solanum</taxon>
        <taxon>Solanum subgen. Lycopersicon</taxon>
    </lineage>
</organism>
<accession>Q2MI72</accession>
<proteinExistence type="inferred from homology"/>
<name>PSBH_SOLLC</name>
<evidence type="ECO:0000250" key="1">
    <source>
        <dbReference type="UniProtKB" id="P56780"/>
    </source>
</evidence>
<evidence type="ECO:0000255" key="2">
    <source>
        <dbReference type="HAMAP-Rule" id="MF_00752"/>
    </source>
</evidence>
<evidence type="ECO:0000256" key="3">
    <source>
        <dbReference type="SAM" id="MobiDB-lite"/>
    </source>
</evidence>